<protein>
    <recommendedName>
        <fullName evidence="1">Small ribosomal subunit protein uS7</fullName>
    </recommendedName>
    <alternativeName>
        <fullName evidence="2">30S ribosomal protein S7</fullName>
    </alternativeName>
</protein>
<proteinExistence type="inferred from homology"/>
<organism>
    <name type="scientific">Neisseria meningitidis serogroup C (strain 053442)</name>
    <dbReference type="NCBI Taxonomy" id="374833"/>
    <lineage>
        <taxon>Bacteria</taxon>
        <taxon>Pseudomonadati</taxon>
        <taxon>Pseudomonadota</taxon>
        <taxon>Betaproteobacteria</taxon>
        <taxon>Neisseriales</taxon>
        <taxon>Neisseriaceae</taxon>
        <taxon>Neisseria</taxon>
    </lineage>
</organism>
<dbReference type="EMBL" id="CP000381">
    <property type="protein sequence ID" value="ABX74133.1"/>
    <property type="molecule type" value="Genomic_DNA"/>
</dbReference>
<dbReference type="RefSeq" id="WP_002215391.1">
    <property type="nucleotide sequence ID" value="NC_010120.1"/>
</dbReference>
<dbReference type="SMR" id="A9M3X1"/>
<dbReference type="GeneID" id="93387211"/>
<dbReference type="KEGG" id="nmn:NMCC_2010"/>
<dbReference type="HOGENOM" id="CLU_072226_1_1_4"/>
<dbReference type="Proteomes" id="UP000001177">
    <property type="component" value="Chromosome"/>
</dbReference>
<dbReference type="GO" id="GO:0015935">
    <property type="term" value="C:small ribosomal subunit"/>
    <property type="evidence" value="ECO:0007669"/>
    <property type="project" value="InterPro"/>
</dbReference>
<dbReference type="GO" id="GO:0019843">
    <property type="term" value="F:rRNA binding"/>
    <property type="evidence" value="ECO:0007669"/>
    <property type="project" value="UniProtKB-UniRule"/>
</dbReference>
<dbReference type="GO" id="GO:0003735">
    <property type="term" value="F:structural constituent of ribosome"/>
    <property type="evidence" value="ECO:0007669"/>
    <property type="project" value="InterPro"/>
</dbReference>
<dbReference type="GO" id="GO:0000049">
    <property type="term" value="F:tRNA binding"/>
    <property type="evidence" value="ECO:0007669"/>
    <property type="project" value="UniProtKB-UniRule"/>
</dbReference>
<dbReference type="GO" id="GO:0006412">
    <property type="term" value="P:translation"/>
    <property type="evidence" value="ECO:0007669"/>
    <property type="project" value="UniProtKB-UniRule"/>
</dbReference>
<dbReference type="CDD" id="cd14869">
    <property type="entry name" value="uS7_Bacteria"/>
    <property type="match status" value="1"/>
</dbReference>
<dbReference type="FunFam" id="1.10.455.10:FF:000001">
    <property type="entry name" value="30S ribosomal protein S7"/>
    <property type="match status" value="1"/>
</dbReference>
<dbReference type="Gene3D" id="1.10.455.10">
    <property type="entry name" value="Ribosomal protein S7 domain"/>
    <property type="match status" value="1"/>
</dbReference>
<dbReference type="HAMAP" id="MF_00480_B">
    <property type="entry name" value="Ribosomal_uS7_B"/>
    <property type="match status" value="1"/>
</dbReference>
<dbReference type="InterPro" id="IPR000235">
    <property type="entry name" value="Ribosomal_uS7"/>
</dbReference>
<dbReference type="InterPro" id="IPR005717">
    <property type="entry name" value="Ribosomal_uS7_bac/org-type"/>
</dbReference>
<dbReference type="InterPro" id="IPR020606">
    <property type="entry name" value="Ribosomal_uS7_CS"/>
</dbReference>
<dbReference type="InterPro" id="IPR023798">
    <property type="entry name" value="Ribosomal_uS7_dom"/>
</dbReference>
<dbReference type="InterPro" id="IPR036823">
    <property type="entry name" value="Ribosomal_uS7_dom_sf"/>
</dbReference>
<dbReference type="NCBIfam" id="TIGR01029">
    <property type="entry name" value="rpsG_bact"/>
    <property type="match status" value="1"/>
</dbReference>
<dbReference type="PANTHER" id="PTHR11205">
    <property type="entry name" value="RIBOSOMAL PROTEIN S7"/>
    <property type="match status" value="1"/>
</dbReference>
<dbReference type="Pfam" id="PF00177">
    <property type="entry name" value="Ribosomal_S7"/>
    <property type="match status" value="1"/>
</dbReference>
<dbReference type="PIRSF" id="PIRSF002122">
    <property type="entry name" value="RPS7p_RPS7a_RPS5e_RPS7o"/>
    <property type="match status" value="1"/>
</dbReference>
<dbReference type="SUPFAM" id="SSF47973">
    <property type="entry name" value="Ribosomal protein S7"/>
    <property type="match status" value="1"/>
</dbReference>
<dbReference type="PROSITE" id="PS00052">
    <property type="entry name" value="RIBOSOMAL_S7"/>
    <property type="match status" value="1"/>
</dbReference>
<keyword id="KW-0687">Ribonucleoprotein</keyword>
<keyword id="KW-0689">Ribosomal protein</keyword>
<keyword id="KW-0694">RNA-binding</keyword>
<keyword id="KW-0699">rRNA-binding</keyword>
<keyword id="KW-0820">tRNA-binding</keyword>
<accession>A9M3X1</accession>
<feature type="chain" id="PRO_1000081290" description="Small ribosomal subunit protein uS7">
    <location>
        <begin position="1"/>
        <end position="156"/>
    </location>
</feature>
<name>RS7_NEIM0</name>
<gene>
    <name evidence="1" type="primary">rpsG</name>
    <name type="ordered locus">NMCC_2010</name>
</gene>
<evidence type="ECO:0000255" key="1">
    <source>
        <dbReference type="HAMAP-Rule" id="MF_00480"/>
    </source>
</evidence>
<evidence type="ECO:0000305" key="2"/>
<sequence>MPRRREVPKRDVLPDPKFGSVELTKFMNVLMIDGKKSVAERIVYGALEQIEKKTGKVAIEVFNEAIANAKPIVEVKSRRVGGANYQVPVEVRPSRRLALAMRWVRDAARKRGEKSMDLRLAGELIDASEGRGGALKKREEVHRMAEANKAFSHFRF</sequence>
<reference key="1">
    <citation type="journal article" date="2008" name="Genomics">
        <title>Characterization of ST-4821 complex, a unique Neisseria meningitidis clone.</title>
        <authorList>
            <person name="Peng J."/>
            <person name="Yang L."/>
            <person name="Yang F."/>
            <person name="Yang J."/>
            <person name="Yan Y."/>
            <person name="Nie H."/>
            <person name="Zhang X."/>
            <person name="Xiong Z."/>
            <person name="Jiang Y."/>
            <person name="Cheng F."/>
            <person name="Xu X."/>
            <person name="Chen S."/>
            <person name="Sun L."/>
            <person name="Li W."/>
            <person name="Shen Y."/>
            <person name="Shao Z."/>
            <person name="Liang X."/>
            <person name="Xu J."/>
            <person name="Jin Q."/>
        </authorList>
    </citation>
    <scope>NUCLEOTIDE SEQUENCE [LARGE SCALE GENOMIC DNA]</scope>
    <source>
        <strain>053442</strain>
    </source>
</reference>
<comment type="function">
    <text evidence="1">One of the primary rRNA binding proteins, it binds directly to 16S rRNA where it nucleates assembly of the head domain of the 30S subunit. Is located at the subunit interface close to the decoding center, probably blocks exit of the E-site tRNA.</text>
</comment>
<comment type="subunit">
    <text evidence="1">Part of the 30S ribosomal subunit. Contacts proteins S9 and S11.</text>
</comment>
<comment type="similarity">
    <text evidence="1">Belongs to the universal ribosomal protein uS7 family.</text>
</comment>